<protein>
    <recommendedName>
        <fullName evidence="1">Elongation factor P--(R)-beta-lysine ligase</fullName>
        <shortName evidence="1">EF-P--(R)-beta-lysine ligase</shortName>
        <ecNumber evidence="1">6.3.2.-</ecNumber>
    </recommendedName>
    <alternativeName>
        <fullName evidence="1">EF-P post-translational modification enzyme A</fullName>
    </alternativeName>
    <alternativeName>
        <fullName evidence="1">EF-P-lysine lysyltransferase</fullName>
    </alternativeName>
</protein>
<proteinExistence type="uncertain"/>
<comment type="function">
    <text evidence="1">With EpmB is involved in the beta-lysylation step of the post-translational modification of translation elongation factor P (EF-P). Catalyzes the ATP-dependent activation of (R)-beta-lysine produced by EpmB, forming a lysyl-adenylate, from which the beta-lysyl moiety is then transferred to the epsilon-amino group of a conserved specific lysine residue in EF-P.</text>
</comment>
<comment type="catalytic activity">
    <reaction evidence="1">
        <text>D-beta-lysine + L-lysyl-[protein] + ATP = N(6)-((3R)-3,6-diaminohexanoyl)-L-lysyl-[protein] + AMP + diphosphate + H(+)</text>
        <dbReference type="Rhea" id="RHEA:83435"/>
        <dbReference type="Rhea" id="RHEA-COMP:9752"/>
        <dbReference type="Rhea" id="RHEA-COMP:20131"/>
        <dbReference type="ChEBI" id="CHEBI:15378"/>
        <dbReference type="ChEBI" id="CHEBI:29969"/>
        <dbReference type="ChEBI" id="CHEBI:30616"/>
        <dbReference type="ChEBI" id="CHEBI:33019"/>
        <dbReference type="ChEBI" id="CHEBI:84138"/>
        <dbReference type="ChEBI" id="CHEBI:156053"/>
        <dbReference type="ChEBI" id="CHEBI:456215"/>
    </reaction>
    <physiologicalReaction direction="left-to-right" evidence="1">
        <dbReference type="Rhea" id="RHEA:83436"/>
    </physiologicalReaction>
</comment>
<comment type="subunit">
    <text evidence="1">Homodimer.</text>
</comment>
<comment type="similarity">
    <text evidence="1">Belongs to the class-II aminoacyl-tRNA synthetase family. EpmA subfamily.</text>
</comment>
<comment type="caution">
    <text evidence="2">Could be the product of a pseudogene.</text>
</comment>
<comment type="sequence caution" evidence="2">
    <conflict type="frameshift">
        <sequence resource="EMBL" id="AE013218"/>
    </conflict>
    <text>This may be a natural frameshift.</text>
</comment>
<gene>
    <name evidence="1" type="primary">epmA</name>
    <name type="synonym">yjeA</name>
    <name type="ordered locus">BUsg_561</name>
</gene>
<dbReference type="EC" id="6.3.2.-" evidence="1"/>
<dbReference type="EMBL" id="AF108665">
    <property type="protein sequence ID" value="AAD19636.1"/>
    <property type="molecule type" value="Genomic_DNA"/>
</dbReference>
<dbReference type="EMBL" id="AE013218">
    <property type="status" value="NOT_ANNOTATED_CDS"/>
    <property type="molecule type" value="Genomic_DNA"/>
</dbReference>
<dbReference type="SMR" id="Q9Z614"/>
<dbReference type="Proteomes" id="UP000000416">
    <property type="component" value="Chromosome"/>
</dbReference>
<dbReference type="GO" id="GO:0005829">
    <property type="term" value="C:cytosol"/>
    <property type="evidence" value="ECO:0007669"/>
    <property type="project" value="TreeGrafter"/>
</dbReference>
<dbReference type="GO" id="GO:0016880">
    <property type="term" value="F:acid-ammonia (or amide) ligase activity"/>
    <property type="evidence" value="ECO:0007669"/>
    <property type="project" value="UniProtKB-UniRule"/>
</dbReference>
<dbReference type="GO" id="GO:0005524">
    <property type="term" value="F:ATP binding"/>
    <property type="evidence" value="ECO:0007669"/>
    <property type="project" value="UniProtKB-UniRule"/>
</dbReference>
<dbReference type="GO" id="GO:0004824">
    <property type="term" value="F:lysine-tRNA ligase activity"/>
    <property type="evidence" value="ECO:0007669"/>
    <property type="project" value="InterPro"/>
</dbReference>
<dbReference type="GO" id="GO:0000049">
    <property type="term" value="F:tRNA binding"/>
    <property type="evidence" value="ECO:0007669"/>
    <property type="project" value="TreeGrafter"/>
</dbReference>
<dbReference type="GO" id="GO:0006430">
    <property type="term" value="P:lysyl-tRNA aminoacylation"/>
    <property type="evidence" value="ECO:0007669"/>
    <property type="project" value="InterPro"/>
</dbReference>
<dbReference type="FunFam" id="3.30.930.10:FF:000017">
    <property type="entry name" value="Elongation factor P--(R)-beta-lysine ligase"/>
    <property type="match status" value="1"/>
</dbReference>
<dbReference type="Gene3D" id="3.30.930.10">
    <property type="entry name" value="Bira Bifunctional Protein, Domain 2"/>
    <property type="match status" value="1"/>
</dbReference>
<dbReference type="HAMAP" id="MF_00174">
    <property type="entry name" value="EF_P_modif_A"/>
    <property type="match status" value="1"/>
</dbReference>
<dbReference type="InterPro" id="IPR004364">
    <property type="entry name" value="Aa-tRNA-synt_II"/>
</dbReference>
<dbReference type="InterPro" id="IPR006195">
    <property type="entry name" value="aa-tRNA-synth_II"/>
</dbReference>
<dbReference type="InterPro" id="IPR045864">
    <property type="entry name" value="aa-tRNA-synth_II/BPL/LPL"/>
</dbReference>
<dbReference type="InterPro" id="IPR004525">
    <property type="entry name" value="EpmA"/>
</dbReference>
<dbReference type="NCBIfam" id="TIGR00462">
    <property type="entry name" value="genX"/>
    <property type="match status" value="1"/>
</dbReference>
<dbReference type="NCBIfam" id="NF006828">
    <property type="entry name" value="PRK09350.1"/>
    <property type="match status" value="1"/>
</dbReference>
<dbReference type="PANTHER" id="PTHR42918:SF6">
    <property type="entry name" value="ELONGATION FACTOR P--(R)-BETA-LYSINE LIGASE"/>
    <property type="match status" value="1"/>
</dbReference>
<dbReference type="PANTHER" id="PTHR42918">
    <property type="entry name" value="LYSYL-TRNA SYNTHETASE"/>
    <property type="match status" value="1"/>
</dbReference>
<dbReference type="Pfam" id="PF00152">
    <property type="entry name" value="tRNA-synt_2"/>
    <property type="match status" value="1"/>
</dbReference>
<dbReference type="SUPFAM" id="SSF55681">
    <property type="entry name" value="Class II aaRS and biotin synthetases"/>
    <property type="match status" value="1"/>
</dbReference>
<dbReference type="PROSITE" id="PS50862">
    <property type="entry name" value="AA_TRNA_LIGASE_II"/>
    <property type="match status" value="1"/>
</dbReference>
<sequence length="324" mass="38308">MKKKWKPSASIKDLMKRSKIIADIRSFFLKKNIMEVETPILSQSGVTDVNLMPFITNYFSFNDNIKKKNLWLITSPEYHMKRLLSAGSGSIYQICRSFRNQEFGQYHNPEFTMLEWYQLSCSMEKMIEEIDFFFQKILNFNKADKISYQEVFMKFLKIDPLSTSLSELFQCYKKFNLKNLIYLENDLNQLIENIFTLQIQPFLGKEKPLFVYHFPSEQACLASINKKDSRVSERFEIFFKGIELGNGFHELTDYFEQRKRFIKDNRKRCDMNLPEQKIDDYFLDAIHHGLPTCSGVAIGLDRLIMIALNKNSIDQVMSFSFERS</sequence>
<keyword id="KW-0067">ATP-binding</keyword>
<keyword id="KW-0436">Ligase</keyword>
<keyword id="KW-0547">Nucleotide-binding</keyword>
<accession>Q9Z614</accession>
<feature type="chain" id="PRO_0000152717" description="Elongation factor P--(R)-beta-lysine ligase">
    <location>
        <begin position="1"/>
        <end position="324"/>
    </location>
</feature>
<feature type="binding site" evidence="1">
    <location>
        <begin position="75"/>
        <end position="77"/>
    </location>
    <ligand>
        <name>substrate</name>
    </ligand>
</feature>
<feature type="binding site" evidence="1">
    <location>
        <begin position="99"/>
        <end position="101"/>
    </location>
    <ligand>
        <name>ATP</name>
        <dbReference type="ChEBI" id="CHEBI:30616"/>
    </ligand>
</feature>
<feature type="binding site" evidence="1">
    <location>
        <position position="108"/>
    </location>
    <ligand>
        <name>ATP</name>
        <dbReference type="ChEBI" id="CHEBI:30616"/>
    </ligand>
</feature>
<feature type="binding site" evidence="1">
    <location>
        <position position="117"/>
    </location>
    <ligand>
        <name>substrate</name>
    </ligand>
</feature>
<feature type="binding site" evidence="1">
    <location>
        <begin position="243"/>
        <end position="244"/>
    </location>
    <ligand>
        <name>ATP</name>
        <dbReference type="ChEBI" id="CHEBI:30616"/>
    </ligand>
</feature>
<feature type="binding site" evidence="1">
    <location>
        <position position="250"/>
    </location>
    <ligand>
        <name>substrate</name>
    </ligand>
</feature>
<feature type="binding site" evidence="1">
    <location>
        <position position="299"/>
    </location>
    <ligand>
        <name>ATP</name>
        <dbReference type="ChEBI" id="CHEBI:30616"/>
    </ligand>
</feature>
<organism>
    <name type="scientific">Buchnera aphidicola subsp. Schizaphis graminum (strain Sg)</name>
    <dbReference type="NCBI Taxonomy" id="198804"/>
    <lineage>
        <taxon>Bacteria</taxon>
        <taxon>Pseudomonadati</taxon>
        <taxon>Pseudomonadota</taxon>
        <taxon>Gammaproteobacteria</taxon>
        <taxon>Enterobacterales</taxon>
        <taxon>Erwiniaceae</taxon>
        <taxon>Buchnera</taxon>
    </lineage>
</organism>
<name>EPMA_BUCAP</name>
<reference key="1">
    <citation type="submission" date="1998-11" db="EMBL/GenBank/DDBJ databases">
        <title>Buchnera plasmid-associated trpEG probably originated from a chromosomal location between hslU and fpr.</title>
        <authorList>
            <person name="Clark M.A."/>
            <person name="Baumann P."/>
            <person name="Moran M.A."/>
        </authorList>
    </citation>
    <scope>NUCLEOTIDE SEQUENCE [GENOMIC DNA]</scope>
</reference>
<reference key="2">
    <citation type="journal article" date="2002" name="Science">
        <title>50 million years of genomic stasis in endosymbiotic bacteria.</title>
        <authorList>
            <person name="Tamas I."/>
            <person name="Klasson L."/>
            <person name="Canbaeck B."/>
            <person name="Naeslund A.K."/>
            <person name="Eriksson A.-S."/>
            <person name="Wernegreen J.J."/>
            <person name="Sandstroem J.P."/>
            <person name="Moran N.A."/>
            <person name="Andersson S.G.E."/>
        </authorList>
    </citation>
    <scope>NUCLEOTIDE SEQUENCE [LARGE SCALE GENOMIC DNA]</scope>
    <source>
        <strain>Sg</strain>
    </source>
</reference>
<evidence type="ECO:0000255" key="1">
    <source>
        <dbReference type="HAMAP-Rule" id="MF_00174"/>
    </source>
</evidence>
<evidence type="ECO:0000305" key="2"/>